<sequence length="148" mass="17082">MATSDIQVKELEKRASGQAFELILGPRSKEAAPEFPLSPPKKKDLSLEEIQKKLEAAEERRKSHEAEVLKQLAEKREHEKEVLQKAIEENNNFSKMAEEKLTHKMEANKENREAQMAAKLERLREKDKHIEEVRKNKEGKDPGEAETN</sequence>
<name>STMN1_CHICK</name>
<comment type="function">
    <text evidence="1">Involved in the regulation of the microtubule (MT) filament system by destabilizing microtubules. It prevents assembly and promotes disassembly of microtubules (By similarity).</text>
</comment>
<comment type="subunit">
    <text evidence="1">Binds to two alpha/beta-tubulin heterodimers.</text>
</comment>
<comment type="interaction">
    <interactant intactId="EBI-1636998">
        <id>P31395</id>
    </interactant>
    <interactant intactId="EBI-1635766">
        <id>Q8AYS8</id>
        <label>KCNMA1</label>
    </interactant>
    <organismsDiffer>false</organismsDiffer>
    <experiments>3</experiments>
</comment>
<comment type="subcellular location">
    <subcellularLocation>
        <location>Cytoplasm</location>
        <location>Cytoskeleton</location>
    </subcellularLocation>
</comment>
<comment type="PTM">
    <text evidence="1">Many different phosphorylated forms are observed depending on specific combinations among the sites which can be phosphorylated. MAPK is responsible for the phosphorylation of stathmin in response to NGF (By similarity).</text>
</comment>
<comment type="similarity">
    <text evidence="5">Belongs to the stathmin family.</text>
</comment>
<comment type="sequence caution" evidence="5">
    <conflict type="erroneous initiation">
        <sequence resource="EMBL-CDS" id="CAA46450"/>
    </conflict>
</comment>
<organism>
    <name type="scientific">Gallus gallus</name>
    <name type="common">Chicken</name>
    <dbReference type="NCBI Taxonomy" id="9031"/>
    <lineage>
        <taxon>Eukaryota</taxon>
        <taxon>Metazoa</taxon>
        <taxon>Chordata</taxon>
        <taxon>Craniata</taxon>
        <taxon>Vertebrata</taxon>
        <taxon>Euteleostomi</taxon>
        <taxon>Archelosauria</taxon>
        <taxon>Archosauria</taxon>
        <taxon>Dinosauria</taxon>
        <taxon>Saurischia</taxon>
        <taxon>Theropoda</taxon>
        <taxon>Coelurosauria</taxon>
        <taxon>Aves</taxon>
        <taxon>Neognathae</taxon>
        <taxon>Galloanserae</taxon>
        <taxon>Galliformes</taxon>
        <taxon>Phasianidae</taxon>
        <taxon>Phasianinae</taxon>
        <taxon>Gallus</taxon>
    </lineage>
</organism>
<proteinExistence type="evidence at protein level"/>
<keyword id="KW-0175">Coiled coil</keyword>
<keyword id="KW-0963">Cytoplasm</keyword>
<keyword id="KW-0206">Cytoskeleton</keyword>
<keyword id="KW-0493">Microtubule</keyword>
<keyword id="KW-0597">Phosphoprotein</keyword>
<keyword id="KW-1185">Reference proteome</keyword>
<protein>
    <recommendedName>
        <fullName>Stathmin</fullName>
    </recommendedName>
</protein>
<reference key="1">
    <citation type="journal article" date="1993" name="Exp. Eye Res.">
        <title>Identification and characterization of transcripts present at elevated levels in the undifferentiated chick retina.</title>
        <authorList>
            <person name="Godbout R."/>
        </authorList>
    </citation>
    <scope>NUCLEOTIDE SEQUENCE [MRNA]</scope>
    <source>
        <tissue>Retina</tissue>
    </source>
</reference>
<accession>P31395</accession>
<dbReference type="EMBL" id="X67840">
    <property type="protein sequence ID" value="CAA48035.1"/>
    <property type="molecule type" value="mRNA"/>
</dbReference>
<dbReference type="EMBL" id="X65458">
    <property type="protein sequence ID" value="CAA46450.1"/>
    <property type="status" value="ALT_INIT"/>
    <property type="molecule type" value="mRNA"/>
</dbReference>
<dbReference type="PIR" id="S31791">
    <property type="entry name" value="S31791"/>
</dbReference>
<dbReference type="RefSeq" id="NP_001001858.1">
    <property type="nucleotide sequence ID" value="NM_001001858.2"/>
</dbReference>
<dbReference type="RefSeq" id="XP_015153089.1">
    <property type="nucleotide sequence ID" value="XM_015297603.4"/>
</dbReference>
<dbReference type="RefSeq" id="XP_015153090.1">
    <property type="nucleotide sequence ID" value="XM_015297604.1"/>
</dbReference>
<dbReference type="RefSeq" id="XP_015153091.1">
    <property type="nucleotide sequence ID" value="XM_015297605.1"/>
</dbReference>
<dbReference type="RefSeq" id="XP_015153092.1">
    <property type="nucleotide sequence ID" value="XM_015297606.4"/>
</dbReference>
<dbReference type="RefSeq" id="XP_040507566.1">
    <property type="nucleotide sequence ID" value="XM_040651632.2"/>
</dbReference>
<dbReference type="RefSeq" id="XP_046787816.1">
    <property type="nucleotide sequence ID" value="XM_046931860.1"/>
</dbReference>
<dbReference type="RefSeq" id="XP_046787817.1">
    <property type="nucleotide sequence ID" value="XM_046931861.1"/>
</dbReference>
<dbReference type="RefSeq" id="XP_046787818.1">
    <property type="nucleotide sequence ID" value="XM_046931862.1"/>
</dbReference>
<dbReference type="SMR" id="P31395"/>
<dbReference type="BioGRID" id="676325">
    <property type="interactions" value="1"/>
</dbReference>
<dbReference type="FunCoup" id="P31395">
    <property type="interactions" value="2328"/>
</dbReference>
<dbReference type="IntAct" id="P31395">
    <property type="interactions" value="1"/>
</dbReference>
<dbReference type="STRING" id="9031.ENSGALP00000060878"/>
<dbReference type="iPTMnet" id="P31395"/>
<dbReference type="PaxDb" id="9031-ENSGALP00000002235"/>
<dbReference type="Ensembl" id="ENSGALT00010032526.1">
    <property type="protein sequence ID" value="ENSGALP00010019267.1"/>
    <property type="gene ID" value="ENSGALG00010013517.1"/>
</dbReference>
<dbReference type="GeneID" id="396057"/>
<dbReference type="KEGG" id="gga:396057"/>
<dbReference type="CTD" id="3925"/>
<dbReference type="VEuPathDB" id="HostDB:geneid_396057"/>
<dbReference type="eggNOG" id="KOG1280">
    <property type="taxonomic scope" value="Eukaryota"/>
</dbReference>
<dbReference type="GeneTree" id="ENSGT01030000234597"/>
<dbReference type="HOGENOM" id="CLU_102026_1_1_1"/>
<dbReference type="InParanoid" id="P31395"/>
<dbReference type="OMA" id="RKSHEAM"/>
<dbReference type="OrthoDB" id="5986631at2759"/>
<dbReference type="PhylomeDB" id="P31395"/>
<dbReference type="TreeFam" id="TF326935"/>
<dbReference type="PRO" id="PR:P31395"/>
<dbReference type="Proteomes" id="UP000000539">
    <property type="component" value="Chromosome 23"/>
</dbReference>
<dbReference type="Bgee" id="ENSGALG00000001475">
    <property type="expression patterns" value="Expressed in spermatid and 14 other cell types or tissues"/>
</dbReference>
<dbReference type="GO" id="GO:0005737">
    <property type="term" value="C:cytoplasm"/>
    <property type="evidence" value="ECO:0000318"/>
    <property type="project" value="GO_Central"/>
</dbReference>
<dbReference type="GO" id="GO:0005829">
    <property type="term" value="C:cytosol"/>
    <property type="evidence" value="ECO:0007669"/>
    <property type="project" value="Ensembl"/>
</dbReference>
<dbReference type="GO" id="GO:0016020">
    <property type="term" value="C:membrane"/>
    <property type="evidence" value="ECO:0007669"/>
    <property type="project" value="Ensembl"/>
</dbReference>
<dbReference type="GO" id="GO:0005874">
    <property type="term" value="C:microtubule"/>
    <property type="evidence" value="ECO:0007669"/>
    <property type="project" value="UniProtKB-KW"/>
</dbReference>
<dbReference type="GO" id="GO:0043005">
    <property type="term" value="C:neuron projection"/>
    <property type="evidence" value="ECO:0000318"/>
    <property type="project" value="GO_Central"/>
</dbReference>
<dbReference type="GO" id="GO:0015631">
    <property type="term" value="F:tubulin binding"/>
    <property type="evidence" value="ECO:0000318"/>
    <property type="project" value="GO_Central"/>
</dbReference>
<dbReference type="GO" id="GO:0007409">
    <property type="term" value="P:axonogenesis"/>
    <property type="evidence" value="ECO:0007669"/>
    <property type="project" value="Ensembl"/>
</dbReference>
<dbReference type="GO" id="GO:0061436">
    <property type="term" value="P:establishment of skin barrier"/>
    <property type="evidence" value="ECO:0007669"/>
    <property type="project" value="Ensembl"/>
</dbReference>
<dbReference type="GO" id="GO:0048012">
    <property type="term" value="P:hepatocyte growth factor receptor signaling pathway"/>
    <property type="evidence" value="ECO:0007669"/>
    <property type="project" value="Ensembl"/>
</dbReference>
<dbReference type="GO" id="GO:0007019">
    <property type="term" value="P:microtubule depolymerization"/>
    <property type="evidence" value="ECO:0000318"/>
    <property type="project" value="GO_Central"/>
</dbReference>
<dbReference type="GO" id="GO:0000281">
    <property type="term" value="P:mitotic cytokinesis"/>
    <property type="evidence" value="ECO:0007669"/>
    <property type="project" value="Ensembl"/>
</dbReference>
<dbReference type="GO" id="GO:0007052">
    <property type="term" value="P:mitotic spindle organization"/>
    <property type="evidence" value="ECO:0007669"/>
    <property type="project" value="Ensembl"/>
</dbReference>
<dbReference type="GO" id="GO:0031115">
    <property type="term" value="P:negative regulation of microtubule polymerization"/>
    <property type="evidence" value="ECO:0007669"/>
    <property type="project" value="Ensembl"/>
</dbReference>
<dbReference type="GO" id="GO:0035024">
    <property type="term" value="P:negative regulation of Rho protein signal transduction"/>
    <property type="evidence" value="ECO:0007669"/>
    <property type="project" value="Ensembl"/>
</dbReference>
<dbReference type="GO" id="GO:0051497">
    <property type="term" value="P:negative regulation of stress fiber assembly"/>
    <property type="evidence" value="ECO:0007669"/>
    <property type="project" value="Ensembl"/>
</dbReference>
<dbReference type="GO" id="GO:0070495">
    <property type="term" value="P:negative regulation of thrombin-activated receptor signaling pathway"/>
    <property type="evidence" value="ECO:0007669"/>
    <property type="project" value="Ensembl"/>
</dbReference>
<dbReference type="GO" id="GO:0031175">
    <property type="term" value="P:neuron projection development"/>
    <property type="evidence" value="ECO:0000318"/>
    <property type="project" value="GO_Central"/>
</dbReference>
<dbReference type="GO" id="GO:0030334">
    <property type="term" value="P:regulation of cell migration"/>
    <property type="evidence" value="ECO:0007669"/>
    <property type="project" value="Ensembl"/>
</dbReference>
<dbReference type="GO" id="GO:0031110">
    <property type="term" value="P:regulation of microtubule polymerization or depolymerization"/>
    <property type="evidence" value="ECO:0000318"/>
    <property type="project" value="GO_Central"/>
</dbReference>
<dbReference type="GO" id="GO:0009615">
    <property type="term" value="P:response to virus"/>
    <property type="evidence" value="ECO:0007669"/>
    <property type="project" value="Ensembl"/>
</dbReference>
<dbReference type="Gene3D" id="6.10.280.30">
    <property type="match status" value="1"/>
</dbReference>
<dbReference type="InterPro" id="IPR030514">
    <property type="entry name" value="Stathmin_CS"/>
</dbReference>
<dbReference type="InterPro" id="IPR000956">
    <property type="entry name" value="Stathmin_fam"/>
</dbReference>
<dbReference type="InterPro" id="IPR036002">
    <property type="entry name" value="Stathmin_sf"/>
</dbReference>
<dbReference type="PANTHER" id="PTHR10104">
    <property type="entry name" value="STATHMIN"/>
    <property type="match status" value="1"/>
</dbReference>
<dbReference type="PANTHER" id="PTHR10104:SF5">
    <property type="entry name" value="STATHMIN"/>
    <property type="match status" value="1"/>
</dbReference>
<dbReference type="Pfam" id="PF00836">
    <property type="entry name" value="Stathmin"/>
    <property type="match status" value="1"/>
</dbReference>
<dbReference type="PIRSF" id="PIRSF002285">
    <property type="entry name" value="Stathmin"/>
    <property type="match status" value="1"/>
</dbReference>
<dbReference type="PRINTS" id="PR00345">
    <property type="entry name" value="STATHMIN"/>
</dbReference>
<dbReference type="SUPFAM" id="SSF101494">
    <property type="entry name" value="Stathmin"/>
    <property type="match status" value="1"/>
</dbReference>
<dbReference type="PROSITE" id="PS00563">
    <property type="entry name" value="STATHMIN_1"/>
    <property type="match status" value="1"/>
</dbReference>
<dbReference type="PROSITE" id="PS01041">
    <property type="entry name" value="STATHMIN_2"/>
    <property type="match status" value="1"/>
</dbReference>
<dbReference type="PROSITE" id="PS51663">
    <property type="entry name" value="STATHMIN_3"/>
    <property type="match status" value="1"/>
</dbReference>
<gene>
    <name type="primary">STMN1</name>
    <name type="synonym">LAP18</name>
</gene>
<feature type="chain" id="PRO_0000182393" description="Stathmin">
    <location>
        <begin position="1"/>
        <end position="148"/>
    </location>
</feature>
<feature type="domain" description="SLD" evidence="3">
    <location>
        <begin position="4"/>
        <end position="145"/>
    </location>
</feature>
<feature type="region of interest" description="Disordered" evidence="4">
    <location>
        <begin position="122"/>
        <end position="148"/>
    </location>
</feature>
<feature type="coiled-coil region" evidence="2">
    <location>
        <begin position="41"/>
        <end position="140"/>
    </location>
</feature>
<feature type="modified residue" description="Phosphoserine; by PKA" evidence="1">
    <location>
        <position position="16"/>
    </location>
</feature>
<feature type="modified residue" description="Phosphoserine; by CDK1" evidence="1">
    <location>
        <position position="38"/>
    </location>
</feature>
<feature type="modified residue" description="Phosphoserine; by PKA" evidence="1">
    <location>
        <position position="63"/>
    </location>
</feature>
<evidence type="ECO:0000250" key="1"/>
<evidence type="ECO:0000255" key="2"/>
<evidence type="ECO:0000255" key="3">
    <source>
        <dbReference type="PROSITE-ProRule" id="PRU00998"/>
    </source>
</evidence>
<evidence type="ECO:0000256" key="4">
    <source>
        <dbReference type="SAM" id="MobiDB-lite"/>
    </source>
</evidence>
<evidence type="ECO:0000305" key="5"/>